<proteinExistence type="inferred from homology"/>
<gene>
    <name evidence="1" type="primary">rsmA</name>
    <name evidence="1" type="synonym">ksgA</name>
    <name type="ordered locus">CTA_0383</name>
</gene>
<accession>Q3KM04</accession>
<protein>
    <recommendedName>
        <fullName evidence="1">Ribosomal RNA small subunit methyltransferase A</fullName>
        <ecNumber evidence="1">2.1.1.182</ecNumber>
    </recommendedName>
    <alternativeName>
        <fullName evidence="1">16S rRNA (adenine(1518)-N(6)/adenine(1519)-N(6))-dimethyltransferase</fullName>
    </alternativeName>
    <alternativeName>
        <fullName evidence="1">16S rRNA dimethyladenosine transferase</fullName>
    </alternativeName>
    <alternativeName>
        <fullName evidence="1">16S rRNA dimethylase</fullName>
    </alternativeName>
    <alternativeName>
        <fullName evidence="1">S-adenosylmethionine-6-N', N'-adenosyl(rRNA) dimethyltransferase</fullName>
    </alternativeName>
</protein>
<evidence type="ECO:0000255" key="1">
    <source>
        <dbReference type="HAMAP-Rule" id="MF_00607"/>
    </source>
</evidence>
<reference key="1">
    <citation type="journal article" date="2005" name="Infect. Immun.">
        <title>Comparative genomic analysis of Chlamydia trachomatis oculotropic and genitotropic strains.</title>
        <authorList>
            <person name="Carlson J.H."/>
            <person name="Porcella S.F."/>
            <person name="McClarty G."/>
            <person name="Caldwell H.D."/>
        </authorList>
    </citation>
    <scope>NUCLEOTIDE SEQUENCE [LARGE SCALE GENOMIC DNA]</scope>
    <source>
        <strain>ATCC VR-571B / DSM 19440 / HAR-13</strain>
    </source>
</reference>
<dbReference type="EC" id="2.1.1.182" evidence="1"/>
<dbReference type="EMBL" id="CP000051">
    <property type="protein sequence ID" value="AAX50618.1"/>
    <property type="molecule type" value="Genomic_DNA"/>
</dbReference>
<dbReference type="RefSeq" id="WP_009873749.1">
    <property type="nucleotide sequence ID" value="NC_007429.1"/>
</dbReference>
<dbReference type="SMR" id="Q3KM04"/>
<dbReference type="KEGG" id="cta:CTA_0383"/>
<dbReference type="HOGENOM" id="CLU_041220_0_0_0"/>
<dbReference type="Proteomes" id="UP000002532">
    <property type="component" value="Chromosome"/>
</dbReference>
<dbReference type="GO" id="GO:0005829">
    <property type="term" value="C:cytosol"/>
    <property type="evidence" value="ECO:0007669"/>
    <property type="project" value="TreeGrafter"/>
</dbReference>
<dbReference type="GO" id="GO:0052908">
    <property type="term" value="F:16S rRNA (adenine(1518)-N(6)/adenine(1519)-N(6))-dimethyltransferase activity"/>
    <property type="evidence" value="ECO:0007669"/>
    <property type="project" value="UniProtKB-EC"/>
</dbReference>
<dbReference type="GO" id="GO:0003723">
    <property type="term" value="F:RNA binding"/>
    <property type="evidence" value="ECO:0007669"/>
    <property type="project" value="UniProtKB-KW"/>
</dbReference>
<dbReference type="FunFam" id="3.40.50.150:FF:000594">
    <property type="entry name" value="Ribosomal RNA small subunit methyltransferase A"/>
    <property type="match status" value="1"/>
</dbReference>
<dbReference type="Gene3D" id="1.10.8.100">
    <property type="entry name" value="Ribosomal RNA adenine dimethylase-like, domain 2"/>
    <property type="match status" value="1"/>
</dbReference>
<dbReference type="Gene3D" id="3.40.50.150">
    <property type="entry name" value="Vaccinia Virus protein VP39"/>
    <property type="match status" value="1"/>
</dbReference>
<dbReference type="HAMAP" id="MF_00607">
    <property type="entry name" value="16SrRNA_methyltr_A"/>
    <property type="match status" value="1"/>
</dbReference>
<dbReference type="InterPro" id="IPR001737">
    <property type="entry name" value="KsgA/Erm"/>
</dbReference>
<dbReference type="InterPro" id="IPR023165">
    <property type="entry name" value="rRNA_Ade_diMease-like_C"/>
</dbReference>
<dbReference type="InterPro" id="IPR020596">
    <property type="entry name" value="rRNA_Ade_Mease_Trfase_CS"/>
</dbReference>
<dbReference type="InterPro" id="IPR020598">
    <property type="entry name" value="rRNA_Ade_methylase_Trfase_N"/>
</dbReference>
<dbReference type="InterPro" id="IPR011530">
    <property type="entry name" value="rRNA_adenine_dimethylase"/>
</dbReference>
<dbReference type="InterPro" id="IPR029063">
    <property type="entry name" value="SAM-dependent_MTases_sf"/>
</dbReference>
<dbReference type="NCBIfam" id="TIGR00755">
    <property type="entry name" value="ksgA"/>
    <property type="match status" value="1"/>
</dbReference>
<dbReference type="PANTHER" id="PTHR11727">
    <property type="entry name" value="DIMETHYLADENOSINE TRANSFERASE"/>
    <property type="match status" value="1"/>
</dbReference>
<dbReference type="PANTHER" id="PTHR11727:SF7">
    <property type="entry name" value="DIMETHYLADENOSINE TRANSFERASE-RELATED"/>
    <property type="match status" value="1"/>
</dbReference>
<dbReference type="Pfam" id="PF00398">
    <property type="entry name" value="RrnaAD"/>
    <property type="match status" value="1"/>
</dbReference>
<dbReference type="SMART" id="SM00650">
    <property type="entry name" value="rADc"/>
    <property type="match status" value="1"/>
</dbReference>
<dbReference type="SUPFAM" id="SSF53335">
    <property type="entry name" value="S-adenosyl-L-methionine-dependent methyltransferases"/>
    <property type="match status" value="1"/>
</dbReference>
<dbReference type="PROSITE" id="PS01131">
    <property type="entry name" value="RRNA_A_DIMETH"/>
    <property type="match status" value="1"/>
</dbReference>
<dbReference type="PROSITE" id="PS51689">
    <property type="entry name" value="SAM_RNA_A_N6_MT"/>
    <property type="match status" value="1"/>
</dbReference>
<organism>
    <name type="scientific">Chlamydia trachomatis serovar A (strain ATCC VR-571B / DSM 19440 / HAR-13)</name>
    <dbReference type="NCBI Taxonomy" id="315277"/>
    <lineage>
        <taxon>Bacteria</taxon>
        <taxon>Pseudomonadati</taxon>
        <taxon>Chlamydiota</taxon>
        <taxon>Chlamydiia</taxon>
        <taxon>Chlamydiales</taxon>
        <taxon>Chlamydiaceae</taxon>
        <taxon>Chlamydia/Chlamydophila group</taxon>
        <taxon>Chlamydia</taxon>
    </lineage>
</organism>
<comment type="function">
    <text evidence="1">Specifically dimethylates two adjacent adenosines (A1518 and A1519) in the loop of a conserved hairpin near the 3'-end of 16S rRNA in the 30S particle. May play a critical role in biogenesis of 30S subunits.</text>
</comment>
<comment type="catalytic activity">
    <reaction evidence="1">
        <text>adenosine(1518)/adenosine(1519) in 16S rRNA + 4 S-adenosyl-L-methionine = N(6)-dimethyladenosine(1518)/N(6)-dimethyladenosine(1519) in 16S rRNA + 4 S-adenosyl-L-homocysteine + 4 H(+)</text>
        <dbReference type="Rhea" id="RHEA:19609"/>
        <dbReference type="Rhea" id="RHEA-COMP:10232"/>
        <dbReference type="Rhea" id="RHEA-COMP:10233"/>
        <dbReference type="ChEBI" id="CHEBI:15378"/>
        <dbReference type="ChEBI" id="CHEBI:57856"/>
        <dbReference type="ChEBI" id="CHEBI:59789"/>
        <dbReference type="ChEBI" id="CHEBI:74411"/>
        <dbReference type="ChEBI" id="CHEBI:74493"/>
        <dbReference type="EC" id="2.1.1.182"/>
    </reaction>
</comment>
<comment type="subcellular location">
    <subcellularLocation>
        <location evidence="1">Cytoplasm</location>
    </subcellularLocation>
</comment>
<comment type="similarity">
    <text evidence="1">Belongs to the class I-like SAM-binding methyltransferase superfamily. rRNA adenine N(6)-methyltransferase family. RsmA subfamily.</text>
</comment>
<feature type="chain" id="PRO_0000257272" description="Ribosomal RNA small subunit methyltransferase A">
    <location>
        <begin position="1"/>
        <end position="277"/>
    </location>
</feature>
<feature type="binding site" evidence="1">
    <location>
        <position position="27"/>
    </location>
    <ligand>
        <name>S-adenosyl-L-methionine</name>
        <dbReference type="ChEBI" id="CHEBI:59789"/>
    </ligand>
</feature>
<feature type="binding site" evidence="1">
    <location>
        <position position="29"/>
    </location>
    <ligand>
        <name>S-adenosyl-L-methionine</name>
        <dbReference type="ChEBI" id="CHEBI:59789"/>
    </ligand>
</feature>
<feature type="binding site" evidence="1">
    <location>
        <position position="54"/>
    </location>
    <ligand>
        <name>S-adenosyl-L-methionine</name>
        <dbReference type="ChEBI" id="CHEBI:59789"/>
    </ligand>
</feature>
<feature type="binding site" evidence="1">
    <location>
        <position position="75"/>
    </location>
    <ligand>
        <name>S-adenosyl-L-methionine</name>
        <dbReference type="ChEBI" id="CHEBI:59789"/>
    </ligand>
</feature>
<feature type="binding site" evidence="1">
    <location>
        <position position="95"/>
    </location>
    <ligand>
        <name>S-adenosyl-L-methionine</name>
        <dbReference type="ChEBI" id="CHEBI:59789"/>
    </ligand>
</feature>
<feature type="binding site" evidence="1">
    <location>
        <position position="118"/>
    </location>
    <ligand>
        <name>S-adenosyl-L-methionine</name>
        <dbReference type="ChEBI" id="CHEBI:59789"/>
    </ligand>
</feature>
<name>RSMA_CHLTA</name>
<sequence>MARSSIEQLTSFLRSVNGRAKKALSQNFLVDGNILRKILTTAEVQPGDWVLEIGPGFGALSEVLLSQGANVIALEKDPMFEESLSQLPMDIEITDACKYPLTSLEDKGWKGKGRIVANLPYHITTPLLTKFFLECPYRWKTVTVMIQDEVARRITAKPGDKDYGSLTVFLSFFADVQYAFKVSPNCFYPKPSVHSAVVHMRVHEQFALADSEIEEFFTLTRAAFGQRRKLLANSLKNLYPKDKVFQVLEQLGFSEKTRPETIFLEEYLKIFHLLKDI</sequence>
<keyword id="KW-0963">Cytoplasm</keyword>
<keyword id="KW-0489">Methyltransferase</keyword>
<keyword id="KW-0694">RNA-binding</keyword>
<keyword id="KW-0698">rRNA processing</keyword>
<keyword id="KW-0949">S-adenosyl-L-methionine</keyword>
<keyword id="KW-0808">Transferase</keyword>